<accession>P55064</accession>
<accession>Q6FGW8</accession>
<gene>
    <name evidence="14" type="primary">AQP5</name>
</gene>
<protein>
    <recommendedName>
        <fullName evidence="10">Aquaporin-5</fullName>
        <shortName>AQP-5</shortName>
    </recommendedName>
</protein>
<keyword id="KW-0002">3D-structure</keyword>
<keyword id="KW-1003">Cell membrane</keyword>
<keyword id="KW-0968">Cytoplasmic vesicle</keyword>
<keyword id="KW-0225">Disease variant</keyword>
<keyword id="KW-0325">Glycoprotein</keyword>
<keyword id="KW-0472">Membrane</keyword>
<keyword id="KW-1007">Palmoplantar keratoderma</keyword>
<keyword id="KW-1267">Proteomics identification</keyword>
<keyword id="KW-1185">Reference proteome</keyword>
<keyword id="KW-0677">Repeat</keyword>
<keyword id="KW-0812">Transmembrane</keyword>
<keyword id="KW-1133">Transmembrane helix</keyword>
<keyword id="KW-0813">Transport</keyword>
<feature type="chain" id="PRO_0000063951" description="Aquaporin-5">
    <location>
        <begin position="1"/>
        <end position="265"/>
    </location>
</feature>
<feature type="topological domain" description="Cytoplasmic" evidence="4 8">
    <location>
        <begin position="1"/>
        <end position="12"/>
    </location>
</feature>
<feature type="transmembrane region" description="Helical" evidence="4 8">
    <location>
        <begin position="13"/>
        <end position="33"/>
    </location>
</feature>
<feature type="topological domain" description="Extracellular" evidence="4 8">
    <location>
        <begin position="34"/>
        <end position="39"/>
    </location>
</feature>
<feature type="transmembrane region" description="Helical" evidence="4 8">
    <location>
        <begin position="40"/>
        <end position="60"/>
    </location>
</feature>
<feature type="topological domain" description="Cytoplasmic" evidence="4 8">
    <location>
        <begin position="61"/>
        <end position="65"/>
    </location>
</feature>
<feature type="intramembrane region" description="Discontinuously helical" evidence="4 8">
    <location>
        <begin position="66"/>
        <end position="74"/>
    </location>
</feature>
<feature type="topological domain" description="Cytoplasmic" evidence="4 8">
    <location>
        <begin position="75"/>
        <end position="87"/>
    </location>
</feature>
<feature type="transmembrane region" description="Helical" evidence="4 8">
    <location>
        <begin position="88"/>
        <end position="108"/>
    </location>
</feature>
<feature type="topological domain" description="Extracellular" evidence="4 8">
    <location>
        <begin position="109"/>
        <end position="126"/>
    </location>
</feature>
<feature type="transmembrane region" description="Helical" evidence="4 8">
    <location>
        <begin position="127"/>
        <end position="147"/>
    </location>
</feature>
<feature type="topological domain" description="Cytoplasmic" evidence="4 8">
    <location>
        <begin position="148"/>
        <end position="158"/>
    </location>
</feature>
<feature type="transmembrane region" description="Helical" evidence="4 8">
    <location>
        <begin position="159"/>
        <end position="179"/>
    </location>
</feature>
<feature type="topological domain" description="Extracellular" evidence="4 8">
    <location>
        <position position="180"/>
    </location>
</feature>
<feature type="intramembrane region" description="Discontinuously helical" evidence="4 8">
    <location>
        <begin position="181"/>
        <end position="191"/>
    </location>
</feature>
<feature type="topological domain" description="Extracellular" evidence="4 8">
    <location>
        <begin position="192"/>
        <end position="203"/>
    </location>
</feature>
<feature type="transmembrane region" description="Helical" evidence="4 8">
    <location>
        <begin position="204"/>
        <end position="224"/>
    </location>
</feature>
<feature type="topological domain" description="Cytoplasmic" evidence="4 8">
    <location>
        <begin position="225"/>
        <end position="265"/>
    </location>
</feature>
<feature type="short sequence motif" description="NPA 1" evidence="12 13">
    <location>
        <begin position="69"/>
        <end position="71"/>
    </location>
</feature>
<feature type="short sequence motif" description="NPA 2" evidence="12 13">
    <location>
        <begin position="185"/>
        <end position="187"/>
    </location>
</feature>
<feature type="glycosylation site" description="N-linked (GlcNAc...) asparagine" evidence="2">
    <location>
        <position position="124"/>
    </location>
</feature>
<feature type="glycosylation site" description="N-linked (GlcNAc...) asparagine" evidence="2">
    <location>
        <position position="125"/>
    </location>
</feature>
<feature type="sequence variant" id="VAR_070442" description="In PPKB; no effect on localization to plasma membrane; dbSNP:rs398123054." evidence="6">
    <original>A</original>
    <variation>E</variation>
    <location>
        <position position="38"/>
    </location>
</feature>
<feature type="sequence variant" id="VAR_070443" description="In PPKB; no effect on localization to plasma membrane; dbSNP:rs398123055." evidence="6">
    <original>I</original>
    <variation>S</variation>
    <location>
        <position position="45"/>
    </location>
</feature>
<feature type="sequence variant" id="VAR_070444" description="In PPKB; no effect on localization to plasma membrane; dbSNP:rs398123057." evidence="6">
    <original>N</original>
    <variation>D</variation>
    <location>
        <position position="123"/>
    </location>
</feature>
<feature type="sequence variant" id="VAR_089449" description="In PPKB; changed water channel activity; the channel is either leaky and/or more sensitive to hypotonicity; associated with increased TRPV4 basal activity." evidence="7">
    <original>N</original>
    <variation>Y</variation>
    <location>
        <position position="123"/>
    </location>
</feature>
<feature type="sequence variant" id="VAR_070445" description="In PPKB; no effect on localization to plasma membrane; dbSNP:rs398123056." evidence="6">
    <original>I</original>
    <variation>F</variation>
    <location>
        <position position="177"/>
    </location>
</feature>
<feature type="sequence variant" id="VAR_070446" description="In PPKB; no effect on localization to plasma membrane; dbSNP:rs368292687." evidence="6">
    <original>R</original>
    <variation>C</variation>
    <location>
        <position position="188"/>
    </location>
</feature>
<feature type="mutagenesis site" description="No effect on localization to plasma membrane." evidence="8">
    <original>S</original>
    <variation>A</variation>
    <location>
        <position position="156"/>
    </location>
</feature>
<feature type="mutagenesis site" description="Increased localization to plasma membrane." evidence="8">
    <original>S</original>
    <variation>E</variation>
    <location>
        <position position="156"/>
    </location>
</feature>
<feature type="helix" evidence="18">
    <location>
        <begin position="2"/>
        <end position="5"/>
    </location>
</feature>
<feature type="helix" evidence="18">
    <location>
        <begin position="8"/>
        <end position="32"/>
    </location>
</feature>
<feature type="strand" evidence="18">
    <location>
        <begin position="36"/>
        <end position="38"/>
    </location>
</feature>
<feature type="helix" evidence="18">
    <location>
        <begin position="42"/>
        <end position="64"/>
    </location>
</feature>
<feature type="helix" evidence="18">
    <location>
        <begin position="70"/>
        <end position="78"/>
    </location>
</feature>
<feature type="strand" evidence="18">
    <location>
        <begin position="80"/>
        <end position="82"/>
    </location>
</feature>
<feature type="helix" evidence="18">
    <location>
        <begin position="84"/>
        <end position="108"/>
    </location>
</feature>
<feature type="helix" evidence="18">
    <location>
        <begin position="111"/>
        <end position="114"/>
    </location>
</feature>
<feature type="turn" evidence="18">
    <location>
        <begin position="115"/>
        <end position="118"/>
    </location>
</feature>
<feature type="strand" evidence="19">
    <location>
        <begin position="124"/>
        <end position="126"/>
    </location>
</feature>
<feature type="helix" evidence="18">
    <location>
        <begin position="128"/>
        <end position="150"/>
    </location>
</feature>
<feature type="helix" evidence="18">
    <location>
        <begin position="161"/>
        <end position="180"/>
    </location>
</feature>
<feature type="helix" evidence="18">
    <location>
        <begin position="186"/>
        <end position="196"/>
    </location>
</feature>
<feature type="helix" evidence="18">
    <location>
        <begin position="203"/>
        <end position="223"/>
    </location>
</feature>
<feature type="turn" evidence="18">
    <location>
        <begin position="233"/>
        <end position="235"/>
    </location>
</feature>
<feature type="helix" evidence="18">
    <location>
        <begin position="236"/>
        <end position="239"/>
    </location>
</feature>
<organism>
    <name type="scientific">Homo sapiens</name>
    <name type="common">Human</name>
    <dbReference type="NCBI Taxonomy" id="9606"/>
    <lineage>
        <taxon>Eukaryota</taxon>
        <taxon>Metazoa</taxon>
        <taxon>Chordata</taxon>
        <taxon>Craniata</taxon>
        <taxon>Vertebrata</taxon>
        <taxon>Euteleostomi</taxon>
        <taxon>Mammalia</taxon>
        <taxon>Eutheria</taxon>
        <taxon>Euarchontoglires</taxon>
        <taxon>Primates</taxon>
        <taxon>Haplorrhini</taxon>
        <taxon>Catarrhini</taxon>
        <taxon>Hominidae</taxon>
        <taxon>Homo</taxon>
    </lineage>
</organism>
<name>AQP5_HUMAN</name>
<evidence type="ECO:0000250" key="1">
    <source>
        <dbReference type="UniProtKB" id="Q9WTY4"/>
    </source>
</evidence>
<evidence type="ECO:0000255" key="2"/>
<evidence type="ECO:0000269" key="3">
    <source>
    </source>
</evidence>
<evidence type="ECO:0000269" key="4">
    <source>
    </source>
</evidence>
<evidence type="ECO:0000269" key="5">
    <source>
    </source>
</evidence>
<evidence type="ECO:0000269" key="6">
    <source>
    </source>
</evidence>
<evidence type="ECO:0000269" key="7">
    <source>
    </source>
</evidence>
<evidence type="ECO:0000269" key="8">
    <source>
    </source>
</evidence>
<evidence type="ECO:0000269" key="9">
    <source>
    </source>
</evidence>
<evidence type="ECO:0000303" key="10">
    <source>
    </source>
</evidence>
<evidence type="ECO:0000305" key="11"/>
<evidence type="ECO:0000305" key="12">
    <source>
    </source>
</evidence>
<evidence type="ECO:0000305" key="13">
    <source>
    </source>
</evidence>
<evidence type="ECO:0000312" key="14">
    <source>
        <dbReference type="HGNC" id="HGNC:638"/>
    </source>
</evidence>
<evidence type="ECO:0007744" key="15">
    <source>
        <dbReference type="PDB" id="3D9S"/>
    </source>
</evidence>
<evidence type="ECO:0007744" key="16">
    <source>
        <dbReference type="PDB" id="5C5X"/>
    </source>
</evidence>
<evidence type="ECO:0007744" key="17">
    <source>
        <dbReference type="PDB" id="5DYE"/>
    </source>
</evidence>
<evidence type="ECO:0007829" key="18">
    <source>
        <dbReference type="PDB" id="3D9S"/>
    </source>
</evidence>
<evidence type="ECO:0007829" key="19">
    <source>
        <dbReference type="PDB" id="5DYE"/>
    </source>
</evidence>
<reference key="1">
    <citation type="journal article" date="1996" name="J. Biol. Chem.">
        <title>The human aquaporin-5 gene. Molecular characterization and chromosomal localization.</title>
        <authorList>
            <person name="Lee M.D."/>
            <person name="Bhakta K.Y."/>
            <person name="Raina S."/>
            <person name="Yonescu R."/>
            <person name="Griffin C.A."/>
            <person name="Copeland N.G."/>
            <person name="Gilbert D.J."/>
            <person name="Jenkins N.A."/>
            <person name="Preston G.M."/>
            <person name="Agre P."/>
        </authorList>
    </citation>
    <scope>NUCLEOTIDE SEQUENCE [GENOMIC DNA]</scope>
    <scope>FUNCTION</scope>
    <scope>TRANSPORTER ACTIVITY</scope>
    <scope>SUBCELLULAR LOCATION</scope>
</reference>
<reference key="2">
    <citation type="submission" date="2004-06" db="EMBL/GenBank/DDBJ databases">
        <title>Cloning of human full open reading frames in Gateway(TM) system entry vector (pDONR201).</title>
        <authorList>
            <person name="Ebert L."/>
            <person name="Schick M."/>
            <person name="Neubert P."/>
            <person name="Schatten R."/>
            <person name="Henze S."/>
            <person name="Korn B."/>
        </authorList>
    </citation>
    <scope>NUCLEOTIDE SEQUENCE [LARGE SCALE MRNA]</scope>
</reference>
<reference key="3">
    <citation type="journal article" date="2004" name="Genome Res.">
        <title>The status, quality, and expansion of the NIH full-length cDNA project: the Mammalian Gene Collection (MGC).</title>
        <authorList>
            <consortium name="The MGC Project Team"/>
        </authorList>
    </citation>
    <scope>NUCLEOTIDE SEQUENCE [LARGE SCALE MRNA]</scope>
    <source>
        <tissue>Testis</tissue>
    </source>
</reference>
<reference key="4">
    <citation type="journal article" date="2006" name="J. Biol. Chem.">
        <title>A role for AQP5 in activation of TRPV4 by hypotonicity: concerted involvement of AQP5 and TRPV4 in regulation of cell volume recovery.</title>
        <authorList>
            <person name="Liu X."/>
            <person name="Bandyopadhyay B.C."/>
            <person name="Bandyopadhyay B."/>
            <person name="Nakamoto T."/>
            <person name="Singh B."/>
            <person name="Liedtke W."/>
            <person name="Melvin J.E."/>
            <person name="Ambudkar I."/>
        </authorList>
    </citation>
    <scope>FUNCTION</scope>
    <scope>INTERACTION WITH TRPV4</scope>
</reference>
<reference key="5">
    <citation type="journal article" date="2013" name="J. Dermatol. Sci.">
        <title>Immunolocalization and translocation of aquaporin-5 water channel in sweat glands.</title>
        <authorList>
            <person name="Inoue R."/>
            <person name="Sohara E."/>
            <person name="Rai T."/>
            <person name="Satoh T."/>
            <person name="Yokozeki H."/>
            <person name="Sasaki S."/>
            <person name="Uchida S."/>
        </authorList>
    </citation>
    <scope>SUBCELLULAR LOCATION</scope>
    <scope>TISSUE SPECIFICITY</scope>
</reference>
<reference evidence="15" key="6">
    <citation type="journal article" date="2008" name="Proc. Natl. Acad. Sci. U.S.A.">
        <title>High-resolution X-ray structure of human aquaporin 5.</title>
        <authorList>
            <person name="Horsefield R."/>
            <person name="Norden K."/>
            <person name="Fellert M."/>
            <person name="Backmark A."/>
            <person name="Tornroth-Horsefield S."/>
            <person name="Terwisscha van Scheltinga A.C."/>
            <person name="Kvassman J."/>
            <person name="Kjellbom P."/>
            <person name="Johanson U."/>
            <person name="Neutze R."/>
        </authorList>
    </citation>
    <scope>X-RAY CRYSTALLOGRAPHY (2.00 ANGSTROMS) OF 2-265</scope>
    <scope>FUNCTION</scope>
    <scope>TRANSPORTER ACTIVITY</scope>
    <scope>SUBUNIT</scope>
    <scope>DOMAIN</scope>
    <scope>TOPOLOGY</scope>
</reference>
<reference evidence="16 17" key="7">
    <citation type="journal article" date="2015" name="PLoS ONE">
        <title>Plasma Membrane Abundance of Human Aquaporin 5 Is Dynamically Regulated by Multiple Pathways.</title>
        <authorList>
            <person name="Kitchen P."/>
            <person name="Oberg F."/>
            <person name="Sjohamn J."/>
            <person name="Hedfalk K."/>
            <person name="Bill R.M."/>
            <person name="Conner A.C."/>
            <person name="Conner M.T."/>
            <person name="Tornroth-Horsefield S."/>
        </authorList>
    </citation>
    <scope>X-RAY CRYSTALLOGRAPHY (2.60 ANGSTROMS) OF 1-245 OF MUTANT GLU-156</scope>
    <scope>SUBUNIT</scope>
    <scope>SUBCELLULAR LOCATION</scope>
    <scope>MUTAGENESIS OF SER-156</scope>
    <scope>DOMAIN</scope>
    <scope>TOPOLOGY</scope>
</reference>
<reference key="8">
    <citation type="journal article" date="2013" name="Am. J. Hum. Genet.">
        <title>Mutations in AQP5, encoding a water-channel protein, cause autosomal-dominant diffuse nonepidermolytic palmoplantar keratoderma.</title>
        <authorList>
            <person name="Blaydon D.C."/>
            <person name="Lind L.K."/>
            <person name="Plagnol V."/>
            <person name="Linton K.J."/>
            <person name="Smith F.J."/>
            <person name="Wilson N.J."/>
            <person name="McLean W.H."/>
            <person name="Munro C.S."/>
            <person name="South A.P."/>
            <person name="Leigh I.M."/>
            <person name="O'Toole E.A."/>
            <person name="Lundstroem A."/>
            <person name="Kelsell D.P."/>
        </authorList>
    </citation>
    <scope>VARIANTS PPKB GLU-38; SER-45; ASP-123; PHE-177 AND CYS-188</scope>
    <scope>CHARACTERIZATION OF VARIANTS GLU-38; SER-45; ASP-123; PHE-177 AND CYS-188</scope>
    <scope>SUBCELLULAR LOCATION</scope>
</reference>
<reference key="9">
    <citation type="journal article" date="2014" name="J. Invest. Dermatol.">
        <title>Mutation in AQP5, encoding aquaporin 5, causes palmoplantar keratoderma Bothnia type.</title>
        <authorList>
            <person name="Cao X."/>
            <person name="Yin J."/>
            <person name="Wang H."/>
            <person name="Zhao J."/>
            <person name="Zhang J."/>
            <person name="Dai L."/>
            <person name="Zhang J."/>
            <person name="Jiang H."/>
            <person name="Lin Z."/>
            <person name="Yang Y."/>
        </authorList>
    </citation>
    <scope>VARIANT PPKB TYR-123</scope>
    <scope>CHARACTERIZATION OF VARIANT TYR-123</scope>
    <scope>FUNCTION</scope>
    <scope>TRANSPORTER ACTIVITY</scope>
</reference>
<sequence>MKKEVCSVAFLKAVFAEFLATLIFVFFGLGSALKWPSALPTILQIALAFGLAIGTLAQALGPVSGGHINPAITLALLVGNQISLLRAFFYVAAQLVGAIAGAGILYGVAPLNARGNLAVNALNNNTTQGQAMVVELILTFQLALCIFASTDSRRTSPVGSPALSIGLSVTLGHLVGIYFTGCSMNPARSFGPAVVMNRFSPAHWVFWVGPIVGAVLAAILYFYLLFPNSLSLSERVAIIKGTYEPDEDWEEQREERKKTMELTTR</sequence>
<comment type="function">
    <text evidence="1 3 4 9">Aquaporins form homotetrameric transmembrane channels, with each monomer independently mediating water transport across the plasma membrane along its osmotic gradient (PubMed:18768791, PubMed:8621489). Plays an important role in fluid secretion in salivary glands (By similarity). Required for TRPV4 activation by hypotonicity. Together with TRPV4, controls regulatory volume decrease in salivary epithelial cells (PubMed:16571723). Seems to play a redundant role in water transport in the eye, lung and in sweat glands (By similarity).</text>
</comment>
<comment type="catalytic activity">
    <reaction evidence="4 7 9">
        <text>H2O(in) = H2O(out)</text>
        <dbReference type="Rhea" id="RHEA:29667"/>
        <dbReference type="ChEBI" id="CHEBI:15377"/>
    </reaction>
</comment>
<comment type="subunit">
    <text evidence="3 4 8">Homotetramer; each monomer provides an independent water pore (PubMed:18768791, PubMed:26569106). Interacts with TRPV4; the interaction is probably indirect and regulates TRPV4 activation by hypotonicity.</text>
</comment>
<comment type="interaction">
    <interactant intactId="EBI-746103">
        <id>P55064</id>
    </interactant>
    <interactant intactId="EBI-746103">
        <id>P55064</id>
        <label>AQP5</label>
    </interactant>
    <organismsDiffer>false</organismsDiffer>
    <experiments>2</experiments>
</comment>
<comment type="interaction">
    <interactant intactId="EBI-746103">
        <id>P55064</id>
    </interactant>
    <interactant intactId="EBI-304185">
        <id>P61978</id>
        <label>HNRNPK</label>
    </interactant>
    <organismsDiffer>false</organismsDiffer>
    <experiments>3</experiments>
</comment>
<comment type="interaction">
    <interactant intactId="EBI-746103">
        <id>P55064</id>
    </interactant>
    <interactant intactId="EBI-948001">
        <id>Q15323</id>
        <label>KRT31</label>
    </interactant>
    <organismsDiffer>false</organismsDiffer>
    <experiments>3</experiments>
</comment>
<comment type="interaction">
    <interactant intactId="EBI-746103">
        <id>P55064</id>
    </interactant>
    <interactant intactId="EBI-10171697">
        <id>Q6A162</id>
        <label>KRT40</label>
    </interactant>
    <organismsDiffer>false</organismsDiffer>
    <experiments>3</experiments>
</comment>
<comment type="interaction">
    <interactant intactId="EBI-746103">
        <id>P55064</id>
    </interactant>
    <interactant intactId="EBI-724076">
        <id>Q99750</id>
        <label>MDFI</label>
    </interactant>
    <organismsDiffer>false</organismsDiffer>
    <experiments>3</experiments>
</comment>
<comment type="interaction">
    <interactant intactId="EBI-746103">
        <id>P55064</id>
    </interactant>
    <interactant intactId="EBI-945833">
        <id>Q7Z3S9</id>
        <label>NOTCH2NLA</label>
    </interactant>
    <organismsDiffer>false</organismsDiffer>
    <experiments>3</experiments>
</comment>
<comment type="subcellular location">
    <subcellularLocation>
        <location evidence="5">Apical cell membrane</location>
        <topology evidence="4 8">Multi-pass membrane protein</topology>
    </subcellularLocation>
    <subcellularLocation>
        <location evidence="6 8 9">Cell membrane</location>
        <topology evidence="4 8">Multi-pass membrane protein</topology>
    </subcellularLocation>
    <subcellularLocation>
        <location evidence="8">Cytoplasmic vesicle membrane</location>
        <topology evidence="4 8">Multi-pass membrane protein</topology>
    </subcellularLocation>
    <text evidence="8">Hypotonicity increases location at the cell membrane. Phosphorylation decreases location at the cell membrane.</text>
</comment>
<comment type="tissue specificity">
    <text evidence="5">Detected in skin eccrine sweat glands, at the apical cell membrane and at intercellular canaliculi (at protein level).</text>
</comment>
<comment type="domain">
    <text evidence="4 8">Aquaporins contain two tandem repeats each containing three membrane-spanning domains and a pore-forming loop with the signature motif Asn-Pro-Ala (NPA).</text>
</comment>
<comment type="disease" evidence="6 7">
    <disease id="DI-03900">
        <name>Keratoderma, palmoplantar, Bothnian type</name>
        <acronym>PPKB</acronym>
        <description>A dermatological disorder characterized by diffuse non-epidermolytic hyperkeratosis of the skin of palms and soles. PPKB is frequently complicated by fungal infections.</description>
        <dbReference type="MIM" id="600231"/>
    </disease>
    <text>The disease is caused by variants affecting the gene represented in this entry.</text>
</comment>
<comment type="similarity">
    <text evidence="11">Belongs to the MIP/aquaporin (TC 1.A.8) family.</text>
</comment>
<proteinExistence type="evidence at protein level"/>
<dbReference type="EMBL" id="U46569">
    <property type="protein sequence ID" value="AAC50474.1"/>
    <property type="molecule type" value="Genomic_DNA"/>
</dbReference>
<dbReference type="EMBL" id="U46566">
    <property type="protein sequence ID" value="AAC50474.1"/>
    <property type="status" value="JOINED"/>
    <property type="molecule type" value="Genomic_DNA"/>
</dbReference>
<dbReference type="EMBL" id="U46567">
    <property type="protein sequence ID" value="AAC50474.1"/>
    <property type="status" value="JOINED"/>
    <property type="molecule type" value="Genomic_DNA"/>
</dbReference>
<dbReference type="EMBL" id="U46568">
    <property type="protein sequence ID" value="AAC50474.1"/>
    <property type="status" value="JOINED"/>
    <property type="molecule type" value="Genomic_DNA"/>
</dbReference>
<dbReference type="EMBL" id="CR541989">
    <property type="protein sequence ID" value="CAG46786.1"/>
    <property type="molecule type" value="mRNA"/>
</dbReference>
<dbReference type="EMBL" id="CR542022">
    <property type="protein sequence ID" value="CAG46819.1"/>
    <property type="molecule type" value="mRNA"/>
</dbReference>
<dbReference type="EMBL" id="BC032946">
    <property type="protein sequence ID" value="AAH32946.1"/>
    <property type="molecule type" value="mRNA"/>
</dbReference>
<dbReference type="CCDS" id="CCDS8793.1"/>
<dbReference type="RefSeq" id="NP_001642.1">
    <property type="nucleotide sequence ID" value="NM_001651.4"/>
</dbReference>
<dbReference type="PDB" id="3D9S">
    <property type="method" value="X-ray"/>
    <property type="resolution" value="2.00 A"/>
    <property type="chains" value="A/B/C/D=2-265"/>
</dbReference>
<dbReference type="PDB" id="5C5X">
    <property type="method" value="X-ray"/>
    <property type="resolution" value="2.60 A"/>
    <property type="chains" value="A/B/C/D/E/F/G/H=1-245"/>
</dbReference>
<dbReference type="PDB" id="5DYE">
    <property type="method" value="X-ray"/>
    <property type="resolution" value="3.50 A"/>
    <property type="chains" value="A/B/C/D=1-265"/>
</dbReference>
<dbReference type="PDB" id="7STC">
    <property type="method" value="X-ray"/>
    <property type="resolution" value="2.25 A"/>
    <property type="chains" value="A/B/C/D=2-265"/>
</dbReference>
<dbReference type="PDBsum" id="3D9S"/>
<dbReference type="PDBsum" id="5C5X"/>
<dbReference type="PDBsum" id="5DYE"/>
<dbReference type="PDBsum" id="7STC"/>
<dbReference type="SMR" id="P55064"/>
<dbReference type="BioGRID" id="106858">
    <property type="interactions" value="12"/>
</dbReference>
<dbReference type="DIP" id="DIP-46292N"/>
<dbReference type="FunCoup" id="P55064">
    <property type="interactions" value="134"/>
</dbReference>
<dbReference type="IntAct" id="P55064">
    <property type="interactions" value="11"/>
</dbReference>
<dbReference type="MINT" id="P55064"/>
<dbReference type="STRING" id="9606.ENSP00000293599"/>
<dbReference type="ChEMBL" id="CHEMBL4523244"/>
<dbReference type="TCDB" id="1.A.8.8.9">
    <property type="family name" value="the major intrinsic protein (mip) family"/>
</dbReference>
<dbReference type="GlyCosmos" id="P55064">
    <property type="glycosylation" value="2 sites, No reported glycans"/>
</dbReference>
<dbReference type="GlyGen" id="P55064">
    <property type="glycosylation" value="2 sites"/>
</dbReference>
<dbReference type="iPTMnet" id="P55064"/>
<dbReference type="PhosphoSitePlus" id="P55064"/>
<dbReference type="SwissPalm" id="P55064"/>
<dbReference type="BioMuta" id="AQP5"/>
<dbReference type="DMDM" id="1703358"/>
<dbReference type="MassIVE" id="P55064"/>
<dbReference type="PaxDb" id="9606-ENSP00000293599"/>
<dbReference type="PeptideAtlas" id="P55064"/>
<dbReference type="ProteomicsDB" id="56775"/>
<dbReference type="Pumba" id="P55064"/>
<dbReference type="ABCD" id="P55064">
    <property type="antibodies" value="1 sequenced antibody"/>
</dbReference>
<dbReference type="Antibodypedia" id="26098">
    <property type="antibodies" value="322 antibodies from 33 providers"/>
</dbReference>
<dbReference type="DNASU" id="362"/>
<dbReference type="Ensembl" id="ENST00000293599.7">
    <property type="protein sequence ID" value="ENSP00000293599.5"/>
    <property type="gene ID" value="ENSG00000161798.7"/>
</dbReference>
<dbReference type="GeneID" id="362"/>
<dbReference type="KEGG" id="hsa:362"/>
<dbReference type="MANE-Select" id="ENST00000293599.7">
    <property type="protein sequence ID" value="ENSP00000293599.5"/>
    <property type="RefSeq nucleotide sequence ID" value="NM_001651.4"/>
    <property type="RefSeq protein sequence ID" value="NP_001642.1"/>
</dbReference>
<dbReference type="UCSC" id="uc001rvo.4">
    <property type="organism name" value="human"/>
</dbReference>
<dbReference type="AGR" id="HGNC:638"/>
<dbReference type="CTD" id="362"/>
<dbReference type="DisGeNET" id="362"/>
<dbReference type="GeneCards" id="AQP5"/>
<dbReference type="HGNC" id="HGNC:638">
    <property type="gene designation" value="AQP5"/>
</dbReference>
<dbReference type="HPA" id="ENSG00000161798">
    <property type="expression patterns" value="Tissue enhanced (salivary gland, testis)"/>
</dbReference>
<dbReference type="MalaCards" id="AQP5"/>
<dbReference type="MIM" id="600231">
    <property type="type" value="phenotype"/>
</dbReference>
<dbReference type="MIM" id="600442">
    <property type="type" value="gene"/>
</dbReference>
<dbReference type="neXtProt" id="NX_P55064"/>
<dbReference type="OpenTargets" id="ENSG00000161798"/>
<dbReference type="Orphanet" id="2337">
    <property type="disease" value="Diffuse palmoplantar keratoderma, Bothnian type"/>
</dbReference>
<dbReference type="PharmGKB" id="PA24923"/>
<dbReference type="VEuPathDB" id="HostDB:ENSG00000161798"/>
<dbReference type="eggNOG" id="KOG0223">
    <property type="taxonomic scope" value="Eukaryota"/>
</dbReference>
<dbReference type="GeneTree" id="ENSGT00940000161557"/>
<dbReference type="HOGENOM" id="CLU_020019_3_3_1"/>
<dbReference type="InParanoid" id="P55064"/>
<dbReference type="OMA" id="FWVGPIS"/>
<dbReference type="OrthoDB" id="3222at2759"/>
<dbReference type="PAN-GO" id="P55064">
    <property type="GO annotations" value="6 GO annotations based on evolutionary models"/>
</dbReference>
<dbReference type="PhylomeDB" id="P55064"/>
<dbReference type="TreeFam" id="TF312940"/>
<dbReference type="PathwayCommons" id="P55064"/>
<dbReference type="Reactome" id="R-HSA-432047">
    <property type="pathway name" value="Passive transport by Aquaporins"/>
</dbReference>
<dbReference type="SignaLink" id="P55064"/>
<dbReference type="SIGNOR" id="P55064"/>
<dbReference type="BioGRID-ORCS" id="362">
    <property type="hits" value="28 hits in 1142 CRISPR screens"/>
</dbReference>
<dbReference type="ChiTaRS" id="AQP5">
    <property type="organism name" value="human"/>
</dbReference>
<dbReference type="EvolutionaryTrace" id="P55064"/>
<dbReference type="GeneWiki" id="AQP5"/>
<dbReference type="GenomeRNAi" id="362"/>
<dbReference type="Pharos" id="P55064">
    <property type="development level" value="Tbio"/>
</dbReference>
<dbReference type="PRO" id="PR:P55064"/>
<dbReference type="Proteomes" id="UP000005640">
    <property type="component" value="Chromosome 12"/>
</dbReference>
<dbReference type="RNAct" id="P55064">
    <property type="molecule type" value="protein"/>
</dbReference>
<dbReference type="Bgee" id="ENSG00000161798">
    <property type="expression patterns" value="Expressed in olfactory segment of nasal mucosa and 114 other cell types or tissues"/>
</dbReference>
<dbReference type="GO" id="GO:0016324">
    <property type="term" value="C:apical plasma membrane"/>
    <property type="evidence" value="ECO:0000314"/>
    <property type="project" value="UniProtKB"/>
</dbReference>
<dbReference type="GO" id="GO:0009925">
    <property type="term" value="C:basal plasma membrane"/>
    <property type="evidence" value="ECO:0007669"/>
    <property type="project" value="Ensembl"/>
</dbReference>
<dbReference type="GO" id="GO:0030659">
    <property type="term" value="C:cytoplasmic vesicle membrane"/>
    <property type="evidence" value="ECO:0000314"/>
    <property type="project" value="UniProtKB"/>
</dbReference>
<dbReference type="GO" id="GO:0005783">
    <property type="term" value="C:endoplasmic reticulum"/>
    <property type="evidence" value="ECO:0007669"/>
    <property type="project" value="Ensembl"/>
</dbReference>
<dbReference type="GO" id="GO:0070062">
    <property type="term" value="C:extracellular exosome"/>
    <property type="evidence" value="ECO:0007005"/>
    <property type="project" value="UniProtKB"/>
</dbReference>
<dbReference type="GO" id="GO:0005902">
    <property type="term" value="C:microvillus"/>
    <property type="evidence" value="ECO:0007669"/>
    <property type="project" value="Ensembl"/>
</dbReference>
<dbReference type="GO" id="GO:0005886">
    <property type="term" value="C:plasma membrane"/>
    <property type="evidence" value="ECO:0000314"/>
    <property type="project" value="UniProtKB"/>
</dbReference>
<dbReference type="GO" id="GO:0042802">
    <property type="term" value="F:identical protein binding"/>
    <property type="evidence" value="ECO:0000353"/>
    <property type="project" value="IntAct"/>
</dbReference>
<dbReference type="GO" id="GO:0015250">
    <property type="term" value="F:water channel activity"/>
    <property type="evidence" value="ECO:0000314"/>
    <property type="project" value="UniProtKB"/>
</dbReference>
<dbReference type="GO" id="GO:0048593">
    <property type="term" value="P:camera-type eye morphogenesis"/>
    <property type="evidence" value="ECO:0007669"/>
    <property type="project" value="Ensembl"/>
</dbReference>
<dbReference type="GO" id="GO:0015670">
    <property type="term" value="P:carbon dioxide transport"/>
    <property type="evidence" value="ECO:0000314"/>
    <property type="project" value="UniProtKB"/>
</dbReference>
<dbReference type="GO" id="GO:0071476">
    <property type="term" value="P:cellular hypotonic response"/>
    <property type="evidence" value="ECO:0000314"/>
    <property type="project" value="UniProtKB"/>
</dbReference>
<dbReference type="GO" id="GO:0042476">
    <property type="term" value="P:odontogenesis"/>
    <property type="evidence" value="ECO:0000270"/>
    <property type="project" value="UniProtKB"/>
</dbReference>
<dbReference type="GO" id="GO:0030157">
    <property type="term" value="P:pancreatic juice secretion"/>
    <property type="evidence" value="ECO:0000270"/>
    <property type="project" value="UniProtKB"/>
</dbReference>
<dbReference type="GO" id="GO:0051289">
    <property type="term" value="P:protein homotetramerization"/>
    <property type="evidence" value="ECO:0000314"/>
    <property type="project" value="UniProtKB"/>
</dbReference>
<dbReference type="GO" id="GO:0046541">
    <property type="term" value="P:saliva secretion"/>
    <property type="evidence" value="ECO:0007669"/>
    <property type="project" value="Ensembl"/>
</dbReference>
<dbReference type="GO" id="GO:0006833">
    <property type="term" value="P:water transport"/>
    <property type="evidence" value="ECO:0000314"/>
    <property type="project" value="UniProtKB"/>
</dbReference>
<dbReference type="CDD" id="cd00333">
    <property type="entry name" value="MIP"/>
    <property type="match status" value="1"/>
</dbReference>
<dbReference type="FunFam" id="1.20.1080.10:FF:000003">
    <property type="entry name" value="Lens fiber major intrinsic"/>
    <property type="match status" value="1"/>
</dbReference>
<dbReference type="Gene3D" id="1.20.1080.10">
    <property type="entry name" value="Glycerol uptake facilitator protein"/>
    <property type="match status" value="1"/>
</dbReference>
<dbReference type="InterPro" id="IPR023271">
    <property type="entry name" value="Aquaporin-like"/>
</dbReference>
<dbReference type="InterPro" id="IPR023276">
    <property type="entry name" value="Aquaporin_5"/>
</dbReference>
<dbReference type="InterPro" id="IPR034294">
    <property type="entry name" value="Aquaporin_transptr"/>
</dbReference>
<dbReference type="InterPro" id="IPR000425">
    <property type="entry name" value="MIP"/>
</dbReference>
<dbReference type="InterPro" id="IPR022357">
    <property type="entry name" value="MIP_CS"/>
</dbReference>
<dbReference type="NCBIfam" id="TIGR00861">
    <property type="entry name" value="MIP"/>
    <property type="match status" value="1"/>
</dbReference>
<dbReference type="PANTHER" id="PTHR19139">
    <property type="entry name" value="AQUAPORIN TRANSPORTER"/>
    <property type="match status" value="1"/>
</dbReference>
<dbReference type="PANTHER" id="PTHR19139:SF38">
    <property type="entry name" value="AQUAPORIN-5"/>
    <property type="match status" value="1"/>
</dbReference>
<dbReference type="Pfam" id="PF00230">
    <property type="entry name" value="MIP"/>
    <property type="match status" value="1"/>
</dbReference>
<dbReference type="PRINTS" id="PR02017">
    <property type="entry name" value="AQUAPORIN5"/>
</dbReference>
<dbReference type="PRINTS" id="PR00783">
    <property type="entry name" value="MINTRINSICP"/>
</dbReference>
<dbReference type="SUPFAM" id="SSF81338">
    <property type="entry name" value="Aquaporin-like"/>
    <property type="match status" value="1"/>
</dbReference>
<dbReference type="PROSITE" id="PS00221">
    <property type="entry name" value="MIP"/>
    <property type="match status" value="1"/>
</dbReference>